<protein>
    <recommendedName>
        <fullName evidence="1">Orotidine 5'-phosphate decarboxylase</fullName>
        <ecNumber evidence="1">4.1.1.23</ecNumber>
    </recommendedName>
    <alternativeName>
        <fullName evidence="1">OMP decarboxylase</fullName>
        <shortName evidence="1">OMPDCase</shortName>
        <shortName evidence="1">OMPdecase</shortName>
    </alternativeName>
</protein>
<keyword id="KW-0210">Decarboxylase</keyword>
<keyword id="KW-0456">Lyase</keyword>
<keyword id="KW-0665">Pyrimidine biosynthesis</keyword>
<accession>Q5XCK8</accession>
<name>PYRF_STRP6</name>
<reference key="1">
    <citation type="journal article" date="2004" name="J. Infect. Dis.">
        <title>Progress toward characterization of the group A Streptococcus metagenome: complete genome sequence of a macrolide-resistant serotype M6 strain.</title>
        <authorList>
            <person name="Banks D.J."/>
            <person name="Porcella S.F."/>
            <person name="Barbian K.D."/>
            <person name="Beres S.B."/>
            <person name="Philips L.E."/>
            <person name="Voyich J.M."/>
            <person name="DeLeo F.R."/>
            <person name="Martin J.M."/>
            <person name="Somerville G.A."/>
            <person name="Musser J.M."/>
        </authorList>
    </citation>
    <scope>NUCLEOTIDE SEQUENCE [LARGE SCALE GENOMIC DNA]</scope>
    <source>
        <strain>ATCC BAA-946 / MGAS10394</strain>
    </source>
</reference>
<sequence length="230" mass="25004">MKEERPIIALDFSSFEETKAFLDLFPAEEKLYVKIGMELYYAQGPDIVRYIKSLGHNVFLDLKLHDIPNTVRAAMAVLKELDIDMATVHAAGGVEMLKAAREGLGQGPTLIAVTQLTSTSEDQMRGDQNIQTSLLESVLHYSKGAAKAQLDGVVCSAQEVEAIKAVTPTGFTCLTPGIRPKGSNIGDQKRVMTPNQARRIGSDYIVVGRPITQAKDPVAAYQAIKAEWAG</sequence>
<comment type="function">
    <text evidence="1">Catalyzes the decarboxylation of orotidine 5'-monophosphate (OMP) to uridine 5'-monophosphate (UMP).</text>
</comment>
<comment type="catalytic activity">
    <reaction evidence="1">
        <text>orotidine 5'-phosphate + H(+) = UMP + CO2</text>
        <dbReference type="Rhea" id="RHEA:11596"/>
        <dbReference type="ChEBI" id="CHEBI:15378"/>
        <dbReference type="ChEBI" id="CHEBI:16526"/>
        <dbReference type="ChEBI" id="CHEBI:57538"/>
        <dbReference type="ChEBI" id="CHEBI:57865"/>
        <dbReference type="EC" id="4.1.1.23"/>
    </reaction>
</comment>
<comment type="pathway">
    <text evidence="1">Pyrimidine metabolism; UMP biosynthesis via de novo pathway; UMP from orotate: step 2/2.</text>
</comment>
<comment type="subunit">
    <text evidence="1">Homodimer.</text>
</comment>
<comment type="similarity">
    <text evidence="1">Belongs to the OMP decarboxylase family. Type 1 subfamily.</text>
</comment>
<organism>
    <name type="scientific">Streptococcus pyogenes serotype M6 (strain ATCC BAA-946 / MGAS10394)</name>
    <dbReference type="NCBI Taxonomy" id="286636"/>
    <lineage>
        <taxon>Bacteria</taxon>
        <taxon>Bacillati</taxon>
        <taxon>Bacillota</taxon>
        <taxon>Bacilli</taxon>
        <taxon>Lactobacillales</taxon>
        <taxon>Streptococcaceae</taxon>
        <taxon>Streptococcus</taxon>
    </lineage>
</organism>
<gene>
    <name evidence="1" type="primary">pyrF</name>
    <name type="ordered locus">M6_Spy0720</name>
</gene>
<proteinExistence type="inferred from homology"/>
<evidence type="ECO:0000255" key="1">
    <source>
        <dbReference type="HAMAP-Rule" id="MF_01200"/>
    </source>
</evidence>
<dbReference type="EC" id="4.1.1.23" evidence="1"/>
<dbReference type="EMBL" id="CP000003">
    <property type="protein sequence ID" value="AAT86855.1"/>
    <property type="molecule type" value="Genomic_DNA"/>
</dbReference>
<dbReference type="RefSeq" id="WP_011184421.1">
    <property type="nucleotide sequence ID" value="NC_006086.1"/>
</dbReference>
<dbReference type="SMR" id="Q5XCK8"/>
<dbReference type="KEGG" id="spa:M6_Spy0720"/>
<dbReference type="HOGENOM" id="CLU_067069_1_1_9"/>
<dbReference type="UniPathway" id="UPA00070">
    <property type="reaction ID" value="UER00120"/>
</dbReference>
<dbReference type="Proteomes" id="UP000001167">
    <property type="component" value="Chromosome"/>
</dbReference>
<dbReference type="GO" id="GO:0005829">
    <property type="term" value="C:cytosol"/>
    <property type="evidence" value="ECO:0007669"/>
    <property type="project" value="TreeGrafter"/>
</dbReference>
<dbReference type="GO" id="GO:0004590">
    <property type="term" value="F:orotidine-5'-phosphate decarboxylase activity"/>
    <property type="evidence" value="ECO:0007669"/>
    <property type="project" value="UniProtKB-UniRule"/>
</dbReference>
<dbReference type="GO" id="GO:0006207">
    <property type="term" value="P:'de novo' pyrimidine nucleobase biosynthetic process"/>
    <property type="evidence" value="ECO:0007669"/>
    <property type="project" value="InterPro"/>
</dbReference>
<dbReference type="GO" id="GO:0044205">
    <property type="term" value="P:'de novo' UMP biosynthetic process"/>
    <property type="evidence" value="ECO:0007669"/>
    <property type="project" value="UniProtKB-UniRule"/>
</dbReference>
<dbReference type="CDD" id="cd04725">
    <property type="entry name" value="OMP_decarboxylase_like"/>
    <property type="match status" value="1"/>
</dbReference>
<dbReference type="FunFam" id="3.20.20.70:FF:000015">
    <property type="entry name" value="Orotidine 5'-phosphate decarboxylase"/>
    <property type="match status" value="1"/>
</dbReference>
<dbReference type="Gene3D" id="3.20.20.70">
    <property type="entry name" value="Aldolase class I"/>
    <property type="match status" value="1"/>
</dbReference>
<dbReference type="HAMAP" id="MF_01200_B">
    <property type="entry name" value="OMPdecase_type1_B"/>
    <property type="match status" value="1"/>
</dbReference>
<dbReference type="InterPro" id="IPR013785">
    <property type="entry name" value="Aldolase_TIM"/>
</dbReference>
<dbReference type="InterPro" id="IPR014732">
    <property type="entry name" value="OMPdecase"/>
</dbReference>
<dbReference type="InterPro" id="IPR018089">
    <property type="entry name" value="OMPdecase_AS"/>
</dbReference>
<dbReference type="InterPro" id="IPR047596">
    <property type="entry name" value="OMPdecase_bac"/>
</dbReference>
<dbReference type="InterPro" id="IPR001754">
    <property type="entry name" value="OMPdeCOase_dom"/>
</dbReference>
<dbReference type="InterPro" id="IPR011060">
    <property type="entry name" value="RibuloseP-bd_barrel"/>
</dbReference>
<dbReference type="NCBIfam" id="NF001273">
    <property type="entry name" value="PRK00230.1"/>
    <property type="match status" value="1"/>
</dbReference>
<dbReference type="NCBIfam" id="TIGR01740">
    <property type="entry name" value="pyrF"/>
    <property type="match status" value="1"/>
</dbReference>
<dbReference type="PANTHER" id="PTHR32119">
    <property type="entry name" value="OROTIDINE 5'-PHOSPHATE DECARBOXYLASE"/>
    <property type="match status" value="1"/>
</dbReference>
<dbReference type="PANTHER" id="PTHR32119:SF2">
    <property type="entry name" value="OROTIDINE 5'-PHOSPHATE DECARBOXYLASE"/>
    <property type="match status" value="1"/>
</dbReference>
<dbReference type="Pfam" id="PF00215">
    <property type="entry name" value="OMPdecase"/>
    <property type="match status" value="1"/>
</dbReference>
<dbReference type="SMART" id="SM00934">
    <property type="entry name" value="OMPdecase"/>
    <property type="match status" value="1"/>
</dbReference>
<dbReference type="SUPFAM" id="SSF51366">
    <property type="entry name" value="Ribulose-phoshate binding barrel"/>
    <property type="match status" value="1"/>
</dbReference>
<dbReference type="PROSITE" id="PS00156">
    <property type="entry name" value="OMPDECASE"/>
    <property type="match status" value="1"/>
</dbReference>
<feature type="chain" id="PRO_0000134591" description="Orotidine 5'-phosphate decarboxylase">
    <location>
        <begin position="1"/>
        <end position="230"/>
    </location>
</feature>
<feature type="active site" description="Proton donor" evidence="1">
    <location>
        <position position="63"/>
    </location>
</feature>
<feature type="binding site" evidence="1">
    <location>
        <position position="11"/>
    </location>
    <ligand>
        <name>substrate</name>
    </ligand>
</feature>
<feature type="binding site" evidence="1">
    <location>
        <position position="34"/>
    </location>
    <ligand>
        <name>substrate</name>
    </ligand>
</feature>
<feature type="binding site" evidence="1">
    <location>
        <begin position="61"/>
        <end position="70"/>
    </location>
    <ligand>
        <name>substrate</name>
    </ligand>
</feature>
<feature type="binding site" evidence="1">
    <location>
        <position position="117"/>
    </location>
    <ligand>
        <name>substrate</name>
    </ligand>
</feature>
<feature type="binding site" evidence="1">
    <location>
        <position position="179"/>
    </location>
    <ligand>
        <name>substrate</name>
    </ligand>
</feature>
<feature type="binding site" evidence="1">
    <location>
        <position position="188"/>
    </location>
    <ligand>
        <name>substrate</name>
    </ligand>
</feature>
<feature type="binding site" evidence="1">
    <location>
        <position position="208"/>
    </location>
    <ligand>
        <name>substrate</name>
    </ligand>
</feature>
<feature type="binding site" evidence="1">
    <location>
        <position position="209"/>
    </location>
    <ligand>
        <name>substrate</name>
    </ligand>
</feature>